<comment type="function">
    <text>The light-harvesting complex (LHC) functions as a light receptor, it captures and delivers excitation energy to photosystems with which it is closely associated. Energy is transferred from the carotenoid and chlorophyll C (or B) to chlorophyll A and the photosynthetic reaction centers where it is used to synthesize ATP and reducing power.</text>
</comment>
<comment type="subunit">
    <text>The LHC complex of chromophytic algae is composed of fucoxanthin, chlorophyll A and C bound non-covalently by fucoxanthin chlorophyll proteins (FCPs). The ratio of pigments in this LHC is; fucoxanthin: chlorophyll C: chlorophyll A; (0.6-1): (0.1-0.3): (1).</text>
</comment>
<comment type="subcellular location">
    <subcellularLocation>
        <location>Plastid</location>
        <location>Chloroplast thylakoid membrane</location>
    </subcellularLocation>
    <text>FCPs are probably transported across the endoplasmic reticulum membranes that surround the plastid via a signal peptide, followed by translocation across the thylakoid membrane via a transit peptide.</text>
</comment>
<comment type="similarity">
    <text evidence="1">Belongs to the fucoxanthin chlorophyll protein family.</text>
</comment>
<protein>
    <recommendedName>
        <fullName>Fucoxanthin-chlorophyll a-c binding protein, chloroplastic</fullName>
        <shortName>FCP</shortName>
    </recommendedName>
</protein>
<name>FCP_TRICV</name>
<feature type="transit peptide" description="Chloroplast" evidence="1">
    <location>
        <begin position="1"/>
        <end position="30"/>
    </location>
</feature>
<feature type="chain" id="PRO_0000021246" description="Fucoxanthin-chlorophyll a-c binding protein, chloroplastic">
    <location>
        <begin position="31"/>
        <end position="203"/>
    </location>
</feature>
<organism>
    <name type="scientific">Trieres chinensis</name>
    <name type="common">Marine centric diatom</name>
    <name type="synonym">Odontella sinensis</name>
    <dbReference type="NCBI Taxonomy" id="1514140"/>
    <lineage>
        <taxon>Eukaryota</taxon>
        <taxon>Sar</taxon>
        <taxon>Stramenopiles</taxon>
        <taxon>Ochrophyta</taxon>
        <taxon>Bacillariophyta</taxon>
        <taxon>Mediophyceae</taxon>
        <taxon>Biddulphiophycidae</taxon>
        <taxon>Eupodiscales</taxon>
        <taxon>Parodontellaceae</taxon>
        <taxon>Trieres</taxon>
    </lineage>
</organism>
<accession>Q42395</accession>
<reference key="1">
    <citation type="journal article" date="1995" name="Plant Mol. Biol.">
        <title>Nucleotide sequence of two cDNAs encoding fucoxanthin chlorophyll a/c proteins in the diatom Odontella sinensis.</title>
        <authorList>
            <person name="Kroth-Pancic P.G."/>
        </authorList>
    </citation>
    <scope>NUCLEOTIDE SEQUENCE [MRNA]</scope>
</reference>
<sequence>MKLAIAALLAGSAAAFAPAQSGKASTALNMAFESELGAQPPLGFFDPLGMLADADQERFDRLRYVEVKHGRIAHVAFLGQIVTRNGIHLSGNIDYAGNSFDSFPNGWAAISGPDAIPQAGLLQIVAFVGILELAVMKDVTGEGEFPGDFRNGALDFGWDTFDEETKLSKRAIELNNGRAAMMGILGLMVHEQLGGSIPIVGEM</sequence>
<proteinExistence type="evidence at transcript level"/>
<gene>
    <name type="primary">FCPA</name>
</gene>
<gene>
    <name type="primary">FCPB</name>
</gene>
<evidence type="ECO:0000305" key="1"/>
<keyword id="KW-0148">Chlorophyll</keyword>
<keyword id="KW-0150">Chloroplast</keyword>
<keyword id="KW-0157">Chromophore</keyword>
<keyword id="KW-0437">Light-harvesting polypeptide</keyword>
<keyword id="KW-0472">Membrane</keyword>
<keyword id="KW-0602">Photosynthesis</keyword>
<keyword id="KW-0604">Photosystem II</keyword>
<keyword id="KW-0934">Plastid</keyword>
<keyword id="KW-0793">Thylakoid</keyword>
<keyword id="KW-0809">Transit peptide</keyword>
<keyword id="KW-0812">Transmembrane</keyword>
<dbReference type="EMBL" id="X81054">
    <property type="protein sequence ID" value="CAA56944.1"/>
    <property type="molecule type" value="mRNA"/>
</dbReference>
<dbReference type="EMBL" id="X81055">
    <property type="protein sequence ID" value="CAA56945.1"/>
    <property type="molecule type" value="mRNA"/>
</dbReference>
<dbReference type="PIR" id="S47487">
    <property type="entry name" value="S47487"/>
</dbReference>
<dbReference type="SMR" id="Q42395"/>
<dbReference type="GO" id="GO:0009535">
    <property type="term" value="C:chloroplast thylakoid membrane"/>
    <property type="evidence" value="ECO:0007669"/>
    <property type="project" value="UniProtKB-SubCell"/>
</dbReference>
<dbReference type="GO" id="GO:0030076">
    <property type="term" value="C:light-harvesting complex"/>
    <property type="evidence" value="ECO:0007669"/>
    <property type="project" value="UniProtKB-KW"/>
</dbReference>
<dbReference type="GO" id="GO:0009523">
    <property type="term" value="C:photosystem II"/>
    <property type="evidence" value="ECO:0007669"/>
    <property type="project" value="UniProtKB-KW"/>
</dbReference>
<dbReference type="GO" id="GO:0016168">
    <property type="term" value="F:chlorophyll binding"/>
    <property type="evidence" value="ECO:0007669"/>
    <property type="project" value="UniProtKB-KW"/>
</dbReference>
<dbReference type="GO" id="GO:0009765">
    <property type="term" value="P:photosynthesis, light harvesting"/>
    <property type="evidence" value="ECO:0007669"/>
    <property type="project" value="InterPro"/>
</dbReference>
<dbReference type="FunFam" id="1.10.3460.10:FF:000011">
    <property type="entry name" value="Fucoxanthin chlorophyll a/c protein 8"/>
    <property type="match status" value="1"/>
</dbReference>
<dbReference type="Gene3D" id="1.10.3460.10">
    <property type="entry name" value="Chlorophyll a/b binding protein domain"/>
    <property type="match status" value="1"/>
</dbReference>
<dbReference type="InterPro" id="IPR001344">
    <property type="entry name" value="Chloro_AB-bd_pln"/>
</dbReference>
<dbReference type="InterPro" id="IPR022796">
    <property type="entry name" value="Chloroa_b-bind"/>
</dbReference>
<dbReference type="PANTHER" id="PTHR21649">
    <property type="entry name" value="CHLOROPHYLL A/B BINDING PROTEIN"/>
    <property type="match status" value="1"/>
</dbReference>
<dbReference type="Pfam" id="PF00504">
    <property type="entry name" value="Chloroa_b-bind"/>
    <property type="match status" value="1"/>
</dbReference>
<dbReference type="SUPFAM" id="SSF103511">
    <property type="entry name" value="Chlorophyll a-b binding protein"/>
    <property type="match status" value="1"/>
</dbReference>